<gene>
    <name evidence="1" type="primary">metAA</name>
    <name type="ordered locus">BCB4264_A5528</name>
</gene>
<comment type="function">
    <text evidence="1">Transfers an acetyl group from acetyl-CoA to L-homoserine, forming acetyl-L-homoserine.</text>
</comment>
<comment type="catalytic activity">
    <reaction evidence="1">
        <text>L-homoserine + acetyl-CoA = O-acetyl-L-homoserine + CoA</text>
        <dbReference type="Rhea" id="RHEA:13701"/>
        <dbReference type="ChEBI" id="CHEBI:57287"/>
        <dbReference type="ChEBI" id="CHEBI:57288"/>
        <dbReference type="ChEBI" id="CHEBI:57476"/>
        <dbReference type="ChEBI" id="CHEBI:57716"/>
        <dbReference type="EC" id="2.3.1.31"/>
    </reaction>
</comment>
<comment type="pathway">
    <text evidence="1">Amino-acid biosynthesis; L-methionine biosynthesis via de novo pathway; O-acetyl-L-homoserine from L-homoserine: step 1/1.</text>
</comment>
<comment type="subcellular location">
    <subcellularLocation>
        <location evidence="1">Cytoplasm</location>
    </subcellularLocation>
</comment>
<comment type="similarity">
    <text evidence="1">Belongs to the MetA family.</text>
</comment>
<proteinExistence type="inferred from homology"/>
<protein>
    <recommendedName>
        <fullName evidence="1">Homoserine O-acetyltransferase</fullName>
        <shortName evidence="1">HAT</shortName>
        <ecNumber evidence="1">2.3.1.31</ecNumber>
    </recommendedName>
    <alternativeName>
        <fullName evidence="1">Homoserine transacetylase</fullName>
        <shortName evidence="1">HTA</shortName>
    </alternativeName>
</protein>
<name>METAA_BACC4</name>
<sequence length="301" mass="35182">MPIIIDKDLPARKVLQKENIFVMTKERAETQDIRALKIAILNLMPTKQDTEAQLLRLIGNTPLQLDVHLLHMESHLSRNVTQEHLTSFYKTFRDIENEKFDGLIITGAPVETLAFEEVDYWEELKHIMEYSKTNVTSTLHICWGAQAGLYYHYGVPKYPLKEKVFGVFEHEVCEQHVKLLQGFDELFFAPHSRHTEVRENDIRGVKELTLLANSEEAGVHLVIGPEGRQVFALGHSEYSCETLKQEYERDRDKGLNIDVPKNYFKHNNPDEKPLVRWRSHGNLLFSNWLNYYVYQETPYIL</sequence>
<reference key="1">
    <citation type="submission" date="2008-10" db="EMBL/GenBank/DDBJ databases">
        <title>Genome sequence of Bacillus cereus B4264.</title>
        <authorList>
            <person name="Dodson R.J."/>
            <person name="Durkin A.S."/>
            <person name="Rosovitz M.J."/>
            <person name="Rasko D.A."/>
            <person name="Hoffmaster A."/>
            <person name="Ravel J."/>
            <person name="Sutton G."/>
        </authorList>
    </citation>
    <scope>NUCLEOTIDE SEQUENCE [LARGE SCALE GENOMIC DNA]</scope>
    <source>
        <strain>B4264</strain>
    </source>
</reference>
<accession>B7HG67</accession>
<evidence type="ECO:0000255" key="1">
    <source>
        <dbReference type="HAMAP-Rule" id="MF_00295"/>
    </source>
</evidence>
<organism>
    <name type="scientific">Bacillus cereus (strain B4264)</name>
    <dbReference type="NCBI Taxonomy" id="405532"/>
    <lineage>
        <taxon>Bacteria</taxon>
        <taxon>Bacillati</taxon>
        <taxon>Bacillota</taxon>
        <taxon>Bacilli</taxon>
        <taxon>Bacillales</taxon>
        <taxon>Bacillaceae</taxon>
        <taxon>Bacillus</taxon>
        <taxon>Bacillus cereus group</taxon>
    </lineage>
</organism>
<dbReference type="EC" id="2.3.1.31" evidence="1"/>
<dbReference type="EMBL" id="CP001176">
    <property type="protein sequence ID" value="ACK60140.1"/>
    <property type="molecule type" value="Genomic_DNA"/>
</dbReference>
<dbReference type="SMR" id="B7HG67"/>
<dbReference type="KEGG" id="bcb:BCB4264_A5528"/>
<dbReference type="HOGENOM" id="CLU_057851_0_1_9"/>
<dbReference type="UniPathway" id="UPA00051">
    <property type="reaction ID" value="UER00074"/>
</dbReference>
<dbReference type="Proteomes" id="UP000007096">
    <property type="component" value="Chromosome"/>
</dbReference>
<dbReference type="GO" id="GO:0005737">
    <property type="term" value="C:cytoplasm"/>
    <property type="evidence" value="ECO:0007669"/>
    <property type="project" value="UniProtKB-SubCell"/>
</dbReference>
<dbReference type="GO" id="GO:0004414">
    <property type="term" value="F:homoserine O-acetyltransferase activity"/>
    <property type="evidence" value="ECO:0007669"/>
    <property type="project" value="UniProtKB-EC"/>
</dbReference>
<dbReference type="GO" id="GO:0008899">
    <property type="term" value="F:homoserine O-succinyltransferase activity"/>
    <property type="evidence" value="ECO:0007669"/>
    <property type="project" value="UniProtKB-UniRule"/>
</dbReference>
<dbReference type="GO" id="GO:0019281">
    <property type="term" value="P:L-methionine biosynthetic process from homoserine via O-succinyl-L-homoserine and cystathionine"/>
    <property type="evidence" value="ECO:0007669"/>
    <property type="project" value="InterPro"/>
</dbReference>
<dbReference type="CDD" id="cd03131">
    <property type="entry name" value="GATase1_HTS"/>
    <property type="match status" value="1"/>
</dbReference>
<dbReference type="FunFam" id="3.40.50.880:FF:000004">
    <property type="entry name" value="Homoserine O-succinyltransferase"/>
    <property type="match status" value="1"/>
</dbReference>
<dbReference type="Gene3D" id="3.40.50.880">
    <property type="match status" value="1"/>
</dbReference>
<dbReference type="HAMAP" id="MF_00295">
    <property type="entry name" value="MetA_acyltransf"/>
    <property type="match status" value="1"/>
</dbReference>
<dbReference type="InterPro" id="IPR029062">
    <property type="entry name" value="Class_I_gatase-like"/>
</dbReference>
<dbReference type="InterPro" id="IPR005697">
    <property type="entry name" value="HST_MetA"/>
</dbReference>
<dbReference type="InterPro" id="IPR033752">
    <property type="entry name" value="MetA_family"/>
</dbReference>
<dbReference type="NCBIfam" id="TIGR01001">
    <property type="entry name" value="metA"/>
    <property type="match status" value="1"/>
</dbReference>
<dbReference type="PANTHER" id="PTHR20919">
    <property type="entry name" value="HOMOSERINE O-SUCCINYLTRANSFERASE"/>
    <property type="match status" value="1"/>
</dbReference>
<dbReference type="PANTHER" id="PTHR20919:SF0">
    <property type="entry name" value="HOMOSERINE O-SUCCINYLTRANSFERASE"/>
    <property type="match status" value="1"/>
</dbReference>
<dbReference type="Pfam" id="PF04204">
    <property type="entry name" value="HTS"/>
    <property type="match status" value="1"/>
</dbReference>
<dbReference type="PIRSF" id="PIRSF000450">
    <property type="entry name" value="H_ser_succinyltr"/>
    <property type="match status" value="1"/>
</dbReference>
<dbReference type="SUPFAM" id="SSF52317">
    <property type="entry name" value="Class I glutamine amidotransferase-like"/>
    <property type="match status" value="1"/>
</dbReference>
<feature type="chain" id="PRO_1000119446" description="Homoserine O-acetyltransferase">
    <location>
        <begin position="1"/>
        <end position="301"/>
    </location>
</feature>
<feature type="active site" description="Acyl-thioester intermediate" evidence="1">
    <location>
        <position position="142"/>
    </location>
</feature>
<feature type="active site" description="Proton acceptor" evidence="1">
    <location>
        <position position="235"/>
    </location>
</feature>
<feature type="active site" evidence="1">
    <location>
        <position position="237"/>
    </location>
</feature>
<feature type="binding site" evidence="1">
    <location>
        <position position="163"/>
    </location>
    <ligand>
        <name>substrate</name>
    </ligand>
</feature>
<feature type="binding site" evidence="1">
    <location>
        <position position="192"/>
    </location>
    <ligand>
        <name>substrate</name>
    </ligand>
</feature>
<feature type="binding site" evidence="1">
    <location>
        <position position="249"/>
    </location>
    <ligand>
        <name>substrate</name>
    </ligand>
</feature>
<feature type="site" description="Important for acyl-CoA specificity" evidence="1">
    <location>
        <position position="111"/>
    </location>
</feature>
<feature type="site" description="Important for substrate specificity" evidence="1">
    <location>
        <position position="192"/>
    </location>
</feature>
<keyword id="KW-0012">Acyltransferase</keyword>
<keyword id="KW-0028">Amino-acid biosynthesis</keyword>
<keyword id="KW-0963">Cytoplasm</keyword>
<keyword id="KW-0486">Methionine biosynthesis</keyword>
<keyword id="KW-0808">Transferase</keyword>